<protein>
    <recommendedName>
        <fullName>Hapless 2</fullName>
    </recommendedName>
    <alternativeName>
        <fullName evidence="10">Generative cell specific-1</fullName>
    </alternativeName>
</protein>
<feature type="signal peptide" evidence="2">
    <location>
        <begin position="1"/>
        <end position="32"/>
    </location>
</feature>
<feature type="chain" id="PRO_0000439930" description="Hapless 2" evidence="2">
    <location>
        <begin position="33"/>
        <end position="828"/>
    </location>
</feature>
<feature type="topological domain" description="Extracellular" evidence="16">
    <location>
        <begin position="33"/>
        <end position="680"/>
    </location>
</feature>
<feature type="transmembrane region" description="Helical" evidence="2">
    <location>
        <begin position="681"/>
        <end position="701"/>
    </location>
</feature>
<feature type="topological domain" description="Cytoplasmic" evidence="13">
    <location>
        <begin position="702"/>
        <end position="828"/>
    </location>
</feature>
<feature type="region of interest" description="cd loop; involved in gamete fusion" evidence="8">
    <location>
        <begin position="174"/>
        <end position="191"/>
    </location>
</feature>
<feature type="region of interest" description="Disordered" evidence="4">
    <location>
        <begin position="773"/>
        <end position="828"/>
    </location>
</feature>
<feature type="compositionally biased region" description="Basic residues" evidence="4">
    <location>
        <begin position="788"/>
        <end position="798"/>
    </location>
</feature>
<feature type="compositionally biased region" description="Basic and acidic residues" evidence="4">
    <location>
        <begin position="799"/>
        <end position="814"/>
    </location>
</feature>
<feature type="glycosylation site" description="N-linked (GlcNAc...) asparagine" evidence="3">
    <location>
        <position position="74"/>
    </location>
</feature>
<feature type="glycosylation site" description="N-linked (GlcNAc...) asparagine" evidence="3">
    <location>
        <position position="233"/>
    </location>
</feature>
<feature type="glycosylation site" description="N-linked (GlcNAc...) asparagine" evidence="3">
    <location>
        <position position="250"/>
    </location>
</feature>
<feature type="glycosylation site" description="N-linked (GlcNAc...) asparagine" evidence="3">
    <location>
        <position position="264"/>
    </location>
</feature>
<feature type="glycosylation site" description="N-linked (GlcNAc...) asparagine" evidence="3">
    <location>
        <position position="293"/>
    </location>
</feature>
<feature type="glycosylation site" description="N-linked (GlcNAc...) asparagine" evidence="3">
    <location>
        <position position="333"/>
    </location>
</feature>
<feature type="glycosylation site" description="N-linked (GlcNAc...) asparagine" evidence="3">
    <location>
        <position position="479"/>
    </location>
</feature>
<feature type="glycosylation site" description="N-linked (GlcNAc...) asparagine" evidence="3">
    <location>
        <position position="516"/>
    </location>
</feature>
<feature type="glycosylation site" description="N-linked (GlcNAc...) asparagine" evidence="3">
    <location>
        <position position="531"/>
    </location>
</feature>
<feature type="glycosylation site" description="N-linked (GlcNAc...) asparagine" evidence="3">
    <location>
        <position position="539"/>
    </location>
</feature>
<feature type="disulfide bond" evidence="1">
    <location>
        <begin position="53"/>
        <end position="62"/>
    </location>
</feature>
<feature type="disulfide bond" evidence="1">
    <location>
        <begin position="142"/>
        <end position="209"/>
    </location>
</feature>
<feature type="disulfide bond" evidence="1">
    <location>
        <begin position="170"/>
        <end position="381"/>
    </location>
</feature>
<feature type="disulfide bond" evidence="1">
    <location>
        <begin position="172"/>
        <end position="191"/>
    </location>
</feature>
<feature type="disulfide bond" evidence="1">
    <location>
        <begin position="363"/>
        <end position="388"/>
    </location>
</feature>
<feature type="disulfide bond" evidence="1">
    <location>
        <begin position="546"/>
        <end position="592"/>
    </location>
</feature>
<feature type="strand" evidence="20">
    <location>
        <begin position="503"/>
        <end position="508"/>
    </location>
</feature>
<feature type="strand" evidence="20">
    <location>
        <begin position="522"/>
        <end position="530"/>
    </location>
</feature>
<feature type="strand" evidence="20">
    <location>
        <begin position="538"/>
        <end position="547"/>
    </location>
</feature>
<feature type="strand" evidence="19">
    <location>
        <begin position="551"/>
        <end position="553"/>
    </location>
</feature>
<feature type="strand" evidence="19">
    <location>
        <begin position="556"/>
        <end position="558"/>
    </location>
</feature>
<feature type="strand" evidence="20">
    <location>
        <begin position="564"/>
        <end position="568"/>
    </location>
</feature>
<feature type="strand" evidence="20">
    <location>
        <begin position="573"/>
        <end position="581"/>
    </location>
</feature>
<feature type="strand" evidence="20">
    <location>
        <begin position="590"/>
        <end position="597"/>
    </location>
</feature>
<feature type="strand" evidence="20">
    <location>
        <begin position="603"/>
        <end position="611"/>
    </location>
</feature>
<comment type="function">
    <text evidence="5 6 7 8 11">During fertilization, required on male gametes for their fusion with female gametes, and for subsequent ookinete formation in the host (PubMed:18367645, PubMed:18403203, PubMed:21209845, PubMed:29212032). Thereby, required for mosquito-mediated transmission to other animals (PubMed:18367645, PubMed:18403203, PubMed:29212032). Probably initiates the fusion of gamete cell membranes by inserting part of its extracellular domain into the cell membrane of a female gamete (PubMed:20080406).</text>
</comment>
<comment type="subcellular location">
    <subcellularLocation>
        <location evidence="8 14 15">Cell membrane</location>
        <topology evidence="8 14 15">Single-pass type I membrane protein</topology>
    </subcellularLocation>
</comment>
<comment type="developmental stage">
    <text evidence="5 6 8">Detected in male gametocytes and gametes, but not in female gametes, nor in the asexual stages present in host erythrocytes (at protein level).</text>
</comment>
<comment type="domain">
    <text evidence="7">The N-terminal extracellular domain is important for gamete fusion.</text>
</comment>
<comment type="disruption phenotype">
    <text evidence="5 6">No effect on gametogenesis, but abolishes the ability of male gametes to merge with female gates. As a consequence, fertilization cannot occur, the normal life cycle is disrupted and mosquito-mediated transmission is abolished.</text>
</comment>
<comment type="biotechnology">
    <text evidence="8">Potential candidate for the development of parasite sexual stage vaccines. In vitro and in vivo, neutralizing antibodies against the cd loop prevent gamete fertilization and thus transmission.</text>
</comment>
<comment type="miscellaneous">
    <text evidence="11">HAP2/GCS1 family members mediate membrane fusion between gametes in a broad range of eukaryotes, ranging from algae and higher plants to protozoans and cnidaria, suggesting they are derived from an ancestral gamete fusogen. They function similar to viral fusogens, by inserting part of their extracellular domain into the lipid bilayer of an adjoining cell.</text>
</comment>
<comment type="similarity">
    <text evidence="13">Belongs to the HAP2/GCS1 family.</text>
</comment>
<gene>
    <name evidence="9" type="primary">HAP2</name>
    <name evidence="10 12" type="synonym">GCS1</name>
    <name evidence="17" type="ORF">PBANKA_1212600</name>
</gene>
<evidence type="ECO:0000250" key="1">
    <source>
        <dbReference type="UniProtKB" id="A4GRC6"/>
    </source>
</evidence>
<evidence type="ECO:0000255" key="2"/>
<evidence type="ECO:0000255" key="3">
    <source>
        <dbReference type="PROSITE-ProRule" id="PRU00498"/>
    </source>
</evidence>
<evidence type="ECO:0000256" key="4">
    <source>
        <dbReference type="SAM" id="MobiDB-lite"/>
    </source>
</evidence>
<evidence type="ECO:0000269" key="5">
    <source>
    </source>
</evidence>
<evidence type="ECO:0000269" key="6">
    <source>
    </source>
</evidence>
<evidence type="ECO:0000269" key="7">
    <source>
    </source>
</evidence>
<evidence type="ECO:0000269" key="8">
    <source>
    </source>
</evidence>
<evidence type="ECO:0000303" key="9">
    <source>
    </source>
</evidence>
<evidence type="ECO:0000303" key="10">
    <source>
    </source>
</evidence>
<evidence type="ECO:0000303" key="11">
    <source>
    </source>
</evidence>
<evidence type="ECO:0000303" key="12">
    <source>
    </source>
</evidence>
<evidence type="ECO:0000305" key="13"/>
<evidence type="ECO:0000305" key="14">
    <source>
    </source>
</evidence>
<evidence type="ECO:0000305" key="15">
    <source>
    </source>
</evidence>
<evidence type="ECO:0000305" key="16">
    <source>
    </source>
</evidence>
<evidence type="ECO:0000312" key="17">
    <source>
        <dbReference type="EMBL" id="VUC57025.1"/>
    </source>
</evidence>
<evidence type="ECO:0000312" key="18">
    <source>
        <dbReference type="Proteomes" id="UP000074855"/>
    </source>
</evidence>
<evidence type="ECO:0007829" key="19">
    <source>
        <dbReference type="PDB" id="7LR3"/>
    </source>
</evidence>
<evidence type="ECO:0007829" key="20">
    <source>
        <dbReference type="PDB" id="7LR4"/>
    </source>
</evidence>
<reference evidence="18" key="1">
    <citation type="journal article" date="2014" name="BMC Biol.">
        <title>A comprehensive evaluation of rodent malaria parasite genomes and gene expression.</title>
        <authorList>
            <person name="Otto T.D."/>
            <person name="Bohme U."/>
            <person name="Jackson A.P."/>
            <person name="Hunt M."/>
            <person name="Franke-Fayard B."/>
            <person name="Hoeijmakers W.A."/>
            <person name="Religa A.A."/>
            <person name="Robertson L."/>
            <person name="Sanders M."/>
            <person name="Ogun S.A."/>
            <person name="Cunningham D."/>
            <person name="Erhart A."/>
            <person name="Billker O."/>
            <person name="Khan S.M."/>
            <person name="Stunnenberg H.G."/>
            <person name="Langhorne J."/>
            <person name="Holder A.A."/>
            <person name="Waters A.P."/>
            <person name="Newbold C.I."/>
            <person name="Pain A."/>
            <person name="Berriman M."/>
            <person name="Janse C.J."/>
        </authorList>
    </citation>
    <scope>NUCLEOTIDE SEQUENCE [LARGE SCALE GENOMIC DNA]</scope>
    <source>
        <strain evidence="18">ANKA</strain>
    </source>
</reference>
<reference key="2">
    <citation type="journal article" date="2008" name="Curr. Biol.">
        <title>Male fertility of malaria parasites is determined by GCS1, a plant-type reproduction factor.</title>
        <authorList>
            <person name="Hirai M."/>
            <person name="Arai M."/>
            <person name="Mori T."/>
            <person name="Miyagishima S.Y."/>
            <person name="Kawai S."/>
            <person name="Kita K."/>
            <person name="Kuroiwa T."/>
            <person name="Terenius O."/>
            <person name="Matsuoka H."/>
        </authorList>
    </citation>
    <scope>FUNCTION</scope>
    <scope>DISRUPTION PHENOTYPE</scope>
    <scope>DEVELOPMENTAL STAGE</scope>
</reference>
<reference key="3">
    <citation type="journal article" date="2008" name="Genes Dev.">
        <title>The conserved plant sterility gene HAP2 functions after attachment of fusogenic membranes in Chlamydomonas and Plasmodium gametes.</title>
        <authorList>
            <person name="Liu Y."/>
            <person name="Tewari R."/>
            <person name="Ning J."/>
            <person name="Blagborough A.M."/>
            <person name="Garbom S."/>
            <person name="Pei J."/>
            <person name="Grishin N.V."/>
            <person name="Steele R.E."/>
            <person name="Sinden R.E."/>
            <person name="Snell W.J."/>
            <person name="Billker O."/>
        </authorList>
    </citation>
    <scope>FUNCTION</scope>
    <scope>DISRUPTION PHENOTYPE</scope>
    <scope>DEVELOPMENTAL STAGE</scope>
    <scope>SUBCELLULAR LOCATION</scope>
</reference>
<reference key="4">
    <citation type="journal article" date="2010" name="PLoS ONE">
        <title>The functional domain of GCS1-based gamete fusion resides in the amino terminus in plant and parasite species.</title>
        <authorList>
            <person name="Mori T."/>
            <person name="Hirai M."/>
            <person name="Kuroiwa T."/>
            <person name="Miyagishima S.Y."/>
        </authorList>
    </citation>
    <scope>FUNCTION</scope>
    <scope>DOMAIN</scope>
    <scope>SUBCELLULAR LOCATION</scope>
</reference>
<reference key="5">
    <citation type="journal article" date="2010" name="Trends Cell Biol.">
        <title>Is HAP2-GCS1 an ancestral gamete fusogen?</title>
        <authorList>
            <person name="Wong J.L."/>
            <person name="Johnson M.A."/>
        </authorList>
    </citation>
    <scope>REVIEW</scope>
</reference>
<reference key="6">
    <citation type="journal article" date="2017" name="Cell Rep.">
        <title>Targeting the Conserved Fusion Loop of HAP2 Inhibits the Transmission of Plasmodium berghei and falciparum.</title>
        <authorList>
            <person name="Angrisano F."/>
            <person name="Sala K.A."/>
            <person name="Da D.F."/>
            <person name="Liu Y."/>
            <person name="Pei J."/>
            <person name="Grishin N.V."/>
            <person name="Snell W.J."/>
            <person name="Blagborough A.M."/>
        </authorList>
    </citation>
    <scope>FUNCTION</scope>
    <scope>SUBCELLULAR LOCATION</scope>
    <scope>DEVELOPMENTAL STAGE</scope>
    <scope>BIOTECHNOLOGY</scope>
</reference>
<proteinExistence type="evidence at protein level"/>
<accession>Q4YCF6</accession>
<accession>A0A509AQL1</accession>
<dbReference type="EMBL" id="LK023127">
    <property type="protein sequence ID" value="VUC57025.1"/>
    <property type="molecule type" value="Genomic_DNA"/>
</dbReference>
<dbReference type="PDB" id="7LR3">
    <property type="method" value="X-ray"/>
    <property type="resolution" value="2.80 A"/>
    <property type="chains" value="C/D=502-618"/>
</dbReference>
<dbReference type="PDB" id="7LR4">
    <property type="method" value="X-ray"/>
    <property type="resolution" value="2.10 A"/>
    <property type="chains" value="C/D=502-618"/>
</dbReference>
<dbReference type="PDBsum" id="7LR3"/>
<dbReference type="PDBsum" id="7LR4"/>
<dbReference type="SMR" id="Q4YCF6"/>
<dbReference type="STRING" id="5823.A0A509AQL1"/>
<dbReference type="TCDB" id="1.N.3.1.7">
    <property type="family name" value="the hapless2 male gamete fusion factor (fusexin) family"/>
</dbReference>
<dbReference type="GlyCosmos" id="Q4YCF6">
    <property type="glycosylation" value="10 sites, No reported glycans"/>
</dbReference>
<dbReference type="VEuPathDB" id="PlasmoDB:PBANKA_1212600"/>
<dbReference type="eggNOG" id="ENOG502SE1K">
    <property type="taxonomic scope" value="Eukaryota"/>
</dbReference>
<dbReference type="InParanoid" id="Q4YCF6"/>
<dbReference type="OMA" id="EVYEIRP"/>
<dbReference type="Proteomes" id="UP000074855">
    <property type="component" value="Chromosome 12"/>
</dbReference>
<dbReference type="GO" id="GO:0005886">
    <property type="term" value="C:plasma membrane"/>
    <property type="evidence" value="ECO:0000315"/>
    <property type="project" value="UniProtKB"/>
</dbReference>
<dbReference type="GO" id="GO:0008289">
    <property type="term" value="F:lipid binding"/>
    <property type="evidence" value="ECO:0007669"/>
    <property type="project" value="UniProtKB-KW"/>
</dbReference>
<dbReference type="GO" id="GO:0009566">
    <property type="term" value="P:fertilization"/>
    <property type="evidence" value="ECO:0000315"/>
    <property type="project" value="UniProtKB"/>
</dbReference>
<dbReference type="GO" id="GO:0007342">
    <property type="term" value="P:fusion of sperm to egg plasma membrane involved in single fertilization"/>
    <property type="evidence" value="ECO:0000315"/>
    <property type="project" value="UniProtKB"/>
</dbReference>
<dbReference type="InterPro" id="IPR040326">
    <property type="entry name" value="HAP2/GCS1"/>
</dbReference>
<dbReference type="PANTHER" id="PTHR31764:SF0">
    <property type="entry name" value="GENERATIVE CELL SPECIFIC-1_HAP2 DOMAIN-CONTAINING PROTEIN"/>
    <property type="match status" value="1"/>
</dbReference>
<dbReference type="PANTHER" id="PTHR31764">
    <property type="entry name" value="PROTEIN HAPLESS 2"/>
    <property type="match status" value="1"/>
</dbReference>
<keyword id="KW-0002">3D-structure</keyword>
<keyword id="KW-1003">Cell membrane</keyword>
<keyword id="KW-1015">Disulfide bond</keyword>
<keyword id="KW-0278">Fertilization</keyword>
<keyword id="KW-0325">Glycoprotein</keyword>
<keyword id="KW-0446">Lipid-binding</keyword>
<keyword id="KW-0472">Membrane</keyword>
<keyword id="KW-1185">Reference proteome</keyword>
<keyword id="KW-0732">Signal</keyword>
<keyword id="KW-0812">Transmembrane</keyword>
<keyword id="KW-1133">Transmembrane helix</keyword>
<sequence>MKNKLINLRSKHIYKLIIIIFFCIILKYYKWCDFKNKVFFIQLVYSFAKKSVCTSSLDDSTCHTVTFGELDVSNNSVVRLKVMRKGGKGYFLTIRRDYVTVSYYLKYVKDIPLEFREIIDIFNNHKFEQYTQEQINKYTYTCNVRKIEDIDKYDEKNPTKFHEYTRGEACRCQTYNYFKDDEFIKRAKLKCIYYNMLFTESATVYSRHCPIIDLMHFAVYDIEYPPIFNTIVNITIEEYYYNDVSSVLNNKSDLVTKEKKYQLNDTITEIRDDYFDLWLFLKGETHGKRTLVNLSNDYIVIPSSPINNRDVIASDITRNCGLSQNSPLLKGCNYSSICNIMHPCLRKAMMLPKYMFDLSGKTCGKLGVSLNTWRKSEGNFCGSEAGYCISNNLKKYYDIHNSASIKDGISLSKYKIKNIYNSEPQTKIYESYKLPDYLKDKIKNNNHAEMDENDLDNKIFYKPNVAAHSQFIDYKYNGNHSVEIKFETDAIEVYEIRPVSIATITHVTIPNDCASNNSNSNECVLIIHVWNNSKFVGSNFSCSIACTNKETDQLASHINPIAPVRAFIGPNKNYAFYFIIKFLINKEITTLCKAIVKDSNGKECSIEEFELQSKESVHIVESEVDETTDQVVVEHHTQSPDIKNPDEYVCKCTINLLCYVINFKTCSNYYINTVKTLIGKFAIIAILIILAPALIPLLPFFLNFFFLFISTILKLYQSIISTIGQIRIRNNDKPIIYKKKIHDMKTNYLSVSSYSSLSDSSSIYSTDSVSSMRKNKKKFNKNNISSNIKHKKGGKKVKQKEPNRNSNHTSHEYADTSPSGKSKIPPLR</sequence>
<organism>
    <name type="scientific">Plasmodium berghei (strain Anka)</name>
    <dbReference type="NCBI Taxonomy" id="5823"/>
    <lineage>
        <taxon>Eukaryota</taxon>
        <taxon>Sar</taxon>
        <taxon>Alveolata</taxon>
        <taxon>Apicomplexa</taxon>
        <taxon>Aconoidasida</taxon>
        <taxon>Haemosporida</taxon>
        <taxon>Plasmodiidae</taxon>
        <taxon>Plasmodium</taxon>
        <taxon>Plasmodium (Vinckeia)</taxon>
    </lineage>
</organism>
<name>HAP2_PLABA</name>